<dbReference type="EMBL" id="AJ011718">
    <property type="protein sequence ID" value="CAB57312.1"/>
    <property type="molecule type" value="mRNA"/>
</dbReference>
<dbReference type="SMR" id="Q9SMI2"/>
<dbReference type="GO" id="GO:1990904">
    <property type="term" value="C:ribonucleoprotein complex"/>
    <property type="evidence" value="ECO:0007669"/>
    <property type="project" value="UniProtKB-KW"/>
</dbReference>
<dbReference type="GO" id="GO:0005840">
    <property type="term" value="C:ribosome"/>
    <property type="evidence" value="ECO:0007669"/>
    <property type="project" value="UniProtKB-KW"/>
</dbReference>
<dbReference type="GO" id="GO:0003735">
    <property type="term" value="F:structural constituent of ribosome"/>
    <property type="evidence" value="ECO:0007669"/>
    <property type="project" value="InterPro"/>
</dbReference>
<dbReference type="GO" id="GO:0006412">
    <property type="term" value="P:translation"/>
    <property type="evidence" value="ECO:0007669"/>
    <property type="project" value="InterPro"/>
</dbReference>
<dbReference type="FunFam" id="3.30.1230.20:FF:000008">
    <property type="entry name" value="40S ribosomal protein S21"/>
    <property type="match status" value="1"/>
</dbReference>
<dbReference type="Gene3D" id="3.30.1230.20">
    <property type="match status" value="1"/>
</dbReference>
<dbReference type="InterPro" id="IPR001931">
    <property type="entry name" value="Ribosomal_eS21"/>
</dbReference>
<dbReference type="InterPro" id="IPR018279">
    <property type="entry name" value="Ribosomal_eS21_CS"/>
</dbReference>
<dbReference type="InterPro" id="IPR038579">
    <property type="entry name" value="Ribosomal_eS21_sf"/>
</dbReference>
<dbReference type="PANTHER" id="PTHR10442">
    <property type="entry name" value="40S RIBOSOMAL PROTEIN S21"/>
    <property type="match status" value="1"/>
</dbReference>
<dbReference type="Pfam" id="PF01249">
    <property type="entry name" value="Ribosomal_S21e"/>
    <property type="match status" value="1"/>
</dbReference>
<dbReference type="PIRSF" id="PIRSF002148">
    <property type="entry name" value="Ribosomal_S21e"/>
    <property type="match status" value="1"/>
</dbReference>
<dbReference type="PROSITE" id="PS00996">
    <property type="entry name" value="RIBOSOMAL_S21E"/>
    <property type="match status" value="1"/>
</dbReference>
<organism>
    <name type="scientific">Cyanophora paradoxa</name>
    <dbReference type="NCBI Taxonomy" id="2762"/>
    <lineage>
        <taxon>Eukaryota</taxon>
        <taxon>Glaucocystophyceae</taxon>
        <taxon>Cyanophoraceae</taxon>
        <taxon>Cyanophora</taxon>
    </lineage>
</organism>
<accession>Q9SMI2</accession>
<feature type="chain" id="PRO_0000194751" description="Small ribosomal subunit protein eS21">
    <location>
        <begin position="1"/>
        <end position="82"/>
    </location>
</feature>
<sequence length="82" mass="8825">MQNDEGKIVDLYIPRKCSATNRLISATDHAAVQINVGHVDPNSGLYTGDYTTFALCGFVRSMGESDAALNRLCVKHGLAKAI</sequence>
<name>RS21_CYAPA</name>
<reference key="1">
    <citation type="submission" date="1998-10" db="EMBL/GenBank/DDBJ databases">
        <title>Cyanophora paradoxa mRNA for 40S subunit ribosomal protein.</title>
        <authorList>
            <person name="Nickol A.A."/>
            <person name="Schenk H.E.A."/>
        </authorList>
    </citation>
    <scope>NUCLEOTIDE SEQUENCE [MRNA]</scope>
    <source>
        <strain>Pringsheim B 29.80</strain>
    </source>
</reference>
<proteinExistence type="inferred from homology"/>
<protein>
    <recommendedName>
        <fullName evidence="1">Small ribosomal subunit protein eS21</fullName>
    </recommendedName>
    <alternativeName>
        <fullName>40S ribosomal protein S21</fullName>
    </alternativeName>
</protein>
<gene>
    <name type="primary">RPS21</name>
</gene>
<keyword id="KW-0687">Ribonucleoprotein</keyword>
<keyword id="KW-0689">Ribosomal protein</keyword>
<comment type="similarity">
    <text evidence="1">Belongs to the eukaryotic ribosomal protein eS21 family.</text>
</comment>
<evidence type="ECO:0000305" key="1"/>